<reference key="1">
    <citation type="journal article" date="2004" name="Nat. Biotechnol.">
        <title>Complete sequence and comparative genome analysis of the dairy bacterium Streptococcus thermophilus.</title>
        <authorList>
            <person name="Bolotin A."/>
            <person name="Quinquis B."/>
            <person name="Renault P."/>
            <person name="Sorokin A."/>
            <person name="Ehrlich S.D."/>
            <person name="Kulakauskas S."/>
            <person name="Lapidus A."/>
            <person name="Goltsman E."/>
            <person name="Mazur M."/>
            <person name="Pusch G.D."/>
            <person name="Fonstein M."/>
            <person name="Overbeek R."/>
            <person name="Kyprides N."/>
            <person name="Purnelle B."/>
            <person name="Prozzi D."/>
            <person name="Ngui K."/>
            <person name="Masuy D."/>
            <person name="Hancy F."/>
            <person name="Burteau S."/>
            <person name="Boutry M."/>
            <person name="Delcour J."/>
            <person name="Goffeau A."/>
            <person name="Hols P."/>
        </authorList>
    </citation>
    <scope>NUCLEOTIDE SEQUENCE [LARGE SCALE GENOMIC DNA]</scope>
    <source>
        <strain>ATCC BAA-250 / LMG 18311</strain>
    </source>
</reference>
<keyword id="KW-0067">ATP-binding</keyword>
<keyword id="KW-0963">Cytoplasm</keyword>
<keyword id="KW-0418">Kinase</keyword>
<keyword id="KW-0520">NAD</keyword>
<keyword id="KW-0521">NADP</keyword>
<keyword id="KW-0547">Nucleotide-binding</keyword>
<keyword id="KW-1185">Reference proteome</keyword>
<keyword id="KW-0808">Transferase</keyword>
<protein>
    <recommendedName>
        <fullName evidence="1">NAD kinase</fullName>
        <ecNumber evidence="1">2.7.1.23</ecNumber>
    </recommendedName>
    <alternativeName>
        <fullName evidence="1">ATP-dependent NAD kinase</fullName>
    </alternativeName>
</protein>
<name>NADK_STRT2</name>
<proteinExistence type="inferred from homology"/>
<sequence length="279" mass="31167">MMTQMKTSSDEMKVAIIANGKPQSRRVASKLFNAFRDDPDFYLTKKNPDVLISIGGDGMLLSAFHMYEKELARVRFVGIHTGHLGFYTDYLDSEVDQLIETLRKDSGAKISYPLLNVKLTLADGRSFTSIALNEAAIKRNEKTMAADVCLNDVLFESFRGDGLSVSTPTGSTAYNKSLGGAVLHPTIEALQLTEIASLNNRVYRTLGSPLIVPKHEKITVYPTRMGSYTLSVDNKTYINRNVKKVEFSIDQRKISFVASASHTSFWERVRESFIGDMEE</sequence>
<evidence type="ECO:0000255" key="1">
    <source>
        <dbReference type="HAMAP-Rule" id="MF_00361"/>
    </source>
</evidence>
<comment type="function">
    <text evidence="1">Involved in the regulation of the intracellular balance of NAD and NADP, and is a key enzyme in the biosynthesis of NADP. Catalyzes specifically the phosphorylation on 2'-hydroxyl of the adenosine moiety of NAD to yield NADP.</text>
</comment>
<comment type="catalytic activity">
    <reaction evidence="1">
        <text>NAD(+) + ATP = ADP + NADP(+) + H(+)</text>
        <dbReference type="Rhea" id="RHEA:18629"/>
        <dbReference type="ChEBI" id="CHEBI:15378"/>
        <dbReference type="ChEBI" id="CHEBI:30616"/>
        <dbReference type="ChEBI" id="CHEBI:57540"/>
        <dbReference type="ChEBI" id="CHEBI:58349"/>
        <dbReference type="ChEBI" id="CHEBI:456216"/>
        <dbReference type="EC" id="2.7.1.23"/>
    </reaction>
</comment>
<comment type="cofactor">
    <cofactor evidence="1">
        <name>a divalent metal cation</name>
        <dbReference type="ChEBI" id="CHEBI:60240"/>
    </cofactor>
</comment>
<comment type="subcellular location">
    <subcellularLocation>
        <location evidence="1">Cytoplasm</location>
    </subcellularLocation>
</comment>
<comment type="similarity">
    <text evidence="1">Belongs to the NAD kinase family.</text>
</comment>
<organism>
    <name type="scientific">Streptococcus thermophilus (strain ATCC BAA-250 / LMG 18311)</name>
    <dbReference type="NCBI Taxonomy" id="264199"/>
    <lineage>
        <taxon>Bacteria</taxon>
        <taxon>Bacillati</taxon>
        <taxon>Bacillota</taxon>
        <taxon>Bacilli</taxon>
        <taxon>Lactobacillales</taxon>
        <taxon>Streptococcaceae</taxon>
        <taxon>Streptococcus</taxon>
    </lineage>
</organism>
<accession>Q5M3G7</accession>
<gene>
    <name evidence="1" type="primary">nadK</name>
    <name type="ordered locus">stu1457</name>
</gene>
<dbReference type="EC" id="2.7.1.23" evidence="1"/>
<dbReference type="EMBL" id="CP000023">
    <property type="protein sequence ID" value="AAV61068.1"/>
    <property type="molecule type" value="Genomic_DNA"/>
</dbReference>
<dbReference type="SMR" id="Q5M3G7"/>
<dbReference type="STRING" id="264199.stu1457"/>
<dbReference type="KEGG" id="stl:stu1457"/>
<dbReference type="eggNOG" id="COG0061">
    <property type="taxonomic scope" value="Bacteria"/>
</dbReference>
<dbReference type="HOGENOM" id="CLU_008831_0_3_9"/>
<dbReference type="Proteomes" id="UP000001170">
    <property type="component" value="Chromosome"/>
</dbReference>
<dbReference type="GO" id="GO:0005737">
    <property type="term" value="C:cytoplasm"/>
    <property type="evidence" value="ECO:0007669"/>
    <property type="project" value="UniProtKB-SubCell"/>
</dbReference>
<dbReference type="GO" id="GO:0005524">
    <property type="term" value="F:ATP binding"/>
    <property type="evidence" value="ECO:0007669"/>
    <property type="project" value="UniProtKB-KW"/>
</dbReference>
<dbReference type="GO" id="GO:0046872">
    <property type="term" value="F:metal ion binding"/>
    <property type="evidence" value="ECO:0007669"/>
    <property type="project" value="UniProtKB-UniRule"/>
</dbReference>
<dbReference type="GO" id="GO:0051287">
    <property type="term" value="F:NAD binding"/>
    <property type="evidence" value="ECO:0007669"/>
    <property type="project" value="UniProtKB-ARBA"/>
</dbReference>
<dbReference type="GO" id="GO:0003951">
    <property type="term" value="F:NAD+ kinase activity"/>
    <property type="evidence" value="ECO:0007669"/>
    <property type="project" value="UniProtKB-UniRule"/>
</dbReference>
<dbReference type="GO" id="GO:0019674">
    <property type="term" value="P:NAD metabolic process"/>
    <property type="evidence" value="ECO:0007669"/>
    <property type="project" value="InterPro"/>
</dbReference>
<dbReference type="GO" id="GO:0006741">
    <property type="term" value="P:NADP biosynthetic process"/>
    <property type="evidence" value="ECO:0007669"/>
    <property type="project" value="UniProtKB-UniRule"/>
</dbReference>
<dbReference type="Gene3D" id="3.40.50.10330">
    <property type="entry name" value="Probable inorganic polyphosphate/atp-NAD kinase, domain 1"/>
    <property type="match status" value="1"/>
</dbReference>
<dbReference type="Gene3D" id="2.60.200.30">
    <property type="entry name" value="Probable inorganic polyphosphate/atp-NAD kinase, domain 2"/>
    <property type="match status" value="1"/>
</dbReference>
<dbReference type="HAMAP" id="MF_00361">
    <property type="entry name" value="NAD_kinase"/>
    <property type="match status" value="1"/>
</dbReference>
<dbReference type="InterPro" id="IPR017438">
    <property type="entry name" value="ATP-NAD_kinase_N"/>
</dbReference>
<dbReference type="InterPro" id="IPR017437">
    <property type="entry name" value="ATP-NAD_kinase_PpnK-typ_C"/>
</dbReference>
<dbReference type="InterPro" id="IPR016064">
    <property type="entry name" value="NAD/diacylglycerol_kinase_sf"/>
</dbReference>
<dbReference type="InterPro" id="IPR002504">
    <property type="entry name" value="NADK"/>
</dbReference>
<dbReference type="NCBIfam" id="NF003424">
    <property type="entry name" value="PRK04885.1"/>
    <property type="match status" value="1"/>
</dbReference>
<dbReference type="PANTHER" id="PTHR20275">
    <property type="entry name" value="NAD KINASE"/>
    <property type="match status" value="1"/>
</dbReference>
<dbReference type="PANTHER" id="PTHR20275:SF0">
    <property type="entry name" value="NAD KINASE"/>
    <property type="match status" value="1"/>
</dbReference>
<dbReference type="Pfam" id="PF01513">
    <property type="entry name" value="NAD_kinase"/>
    <property type="match status" value="1"/>
</dbReference>
<dbReference type="Pfam" id="PF20143">
    <property type="entry name" value="NAD_kinase_C"/>
    <property type="match status" value="1"/>
</dbReference>
<dbReference type="SUPFAM" id="SSF111331">
    <property type="entry name" value="NAD kinase/diacylglycerol kinase-like"/>
    <property type="match status" value="1"/>
</dbReference>
<feature type="chain" id="PRO_0000229696" description="NAD kinase">
    <location>
        <begin position="1"/>
        <end position="279"/>
    </location>
</feature>
<feature type="active site" description="Proton acceptor" evidence="1">
    <location>
        <position position="57"/>
    </location>
</feature>
<feature type="binding site" evidence="1">
    <location>
        <begin position="57"/>
        <end position="58"/>
    </location>
    <ligand>
        <name>NAD(+)</name>
        <dbReference type="ChEBI" id="CHEBI:57540"/>
    </ligand>
</feature>
<feature type="binding site" evidence="1">
    <location>
        <begin position="133"/>
        <end position="134"/>
    </location>
    <ligand>
        <name>NAD(+)</name>
        <dbReference type="ChEBI" id="CHEBI:57540"/>
    </ligand>
</feature>
<feature type="binding site" evidence="1">
    <location>
        <position position="159"/>
    </location>
    <ligand>
        <name>NAD(+)</name>
        <dbReference type="ChEBI" id="CHEBI:57540"/>
    </ligand>
</feature>
<feature type="binding site" evidence="1">
    <location>
        <position position="161"/>
    </location>
    <ligand>
        <name>NAD(+)</name>
        <dbReference type="ChEBI" id="CHEBI:57540"/>
    </ligand>
</feature>
<feature type="binding site" evidence="1">
    <location>
        <begin position="172"/>
        <end position="177"/>
    </location>
    <ligand>
        <name>NAD(+)</name>
        <dbReference type="ChEBI" id="CHEBI:57540"/>
    </ligand>
</feature>
<feature type="binding site" evidence="1">
    <location>
        <position position="196"/>
    </location>
    <ligand>
        <name>NAD(+)</name>
        <dbReference type="ChEBI" id="CHEBI:57540"/>
    </ligand>
</feature>